<accession>Q97QW0</accession>
<evidence type="ECO:0000255" key="1">
    <source>
        <dbReference type="PROSITE-ProRule" id="PRU01182"/>
    </source>
</evidence>
<evidence type="ECO:0000305" key="2"/>
<reference key="1">
    <citation type="journal article" date="2001" name="Science">
        <title>Complete genome sequence of a virulent isolate of Streptococcus pneumoniae.</title>
        <authorList>
            <person name="Tettelin H."/>
            <person name="Nelson K.E."/>
            <person name="Paulsen I.T."/>
            <person name="Eisen J.A."/>
            <person name="Read T.D."/>
            <person name="Peterson S.N."/>
            <person name="Heidelberg J.F."/>
            <person name="DeBoy R.T."/>
            <person name="Haft D.H."/>
            <person name="Dodson R.J."/>
            <person name="Durkin A.S."/>
            <person name="Gwinn M.L."/>
            <person name="Kolonay J.F."/>
            <person name="Nelson W.C."/>
            <person name="Peterson J.D."/>
            <person name="Umayam L.A."/>
            <person name="White O."/>
            <person name="Salzberg S.L."/>
            <person name="Lewis M.R."/>
            <person name="Radune D."/>
            <person name="Holtzapple E.K."/>
            <person name="Khouri H.M."/>
            <person name="Wolf A.M."/>
            <person name="Utterback T.R."/>
            <person name="Hansen C.L."/>
            <person name="McDonald L.A."/>
            <person name="Feldblyum T.V."/>
            <person name="Angiuoli S.V."/>
            <person name="Dickinson T."/>
            <person name="Hickey E.K."/>
            <person name="Holt I.E."/>
            <person name="Loftus B.J."/>
            <person name="Yang F."/>
            <person name="Smith H.O."/>
            <person name="Venter J.C."/>
            <person name="Dougherty B.A."/>
            <person name="Morrison D.A."/>
            <person name="Hollingshead S.K."/>
            <person name="Fraser C.M."/>
        </authorList>
    </citation>
    <scope>NUCLEOTIDE SEQUENCE [LARGE SCALE GENOMIC DNA]</scope>
    <source>
        <strain>ATCC BAA-334 / TIGR4</strain>
    </source>
</reference>
<gene>
    <name type="ordered locus">SP_1088</name>
</gene>
<dbReference type="EMBL" id="AE005672">
    <property type="protein sequence ID" value="AAK75200.1"/>
    <property type="molecule type" value="Genomic_DNA"/>
</dbReference>
<dbReference type="PIR" id="G95125">
    <property type="entry name" value="G95125"/>
</dbReference>
<dbReference type="SMR" id="Q97QW0"/>
<dbReference type="IntAct" id="Q97QW0">
    <property type="interactions" value="1"/>
</dbReference>
<dbReference type="PaxDb" id="170187-SP_1088"/>
<dbReference type="EnsemblBacteria" id="AAK75200">
    <property type="protein sequence ID" value="AAK75200"/>
    <property type="gene ID" value="SP_1088"/>
</dbReference>
<dbReference type="KEGG" id="spn:SP_1088"/>
<dbReference type="eggNOG" id="COG2003">
    <property type="taxonomic scope" value="Bacteria"/>
</dbReference>
<dbReference type="PhylomeDB" id="Q97QW0"/>
<dbReference type="BioCyc" id="SPNE170187:G1FZB-1117-MONOMER"/>
<dbReference type="Proteomes" id="UP000000585">
    <property type="component" value="Chromosome"/>
</dbReference>
<dbReference type="GO" id="GO:0046872">
    <property type="term" value="F:metal ion binding"/>
    <property type="evidence" value="ECO:0007669"/>
    <property type="project" value="UniProtKB-KW"/>
</dbReference>
<dbReference type="GO" id="GO:0008237">
    <property type="term" value="F:metallopeptidase activity"/>
    <property type="evidence" value="ECO:0007669"/>
    <property type="project" value="UniProtKB-KW"/>
</dbReference>
<dbReference type="GO" id="GO:0006508">
    <property type="term" value="P:proteolysis"/>
    <property type="evidence" value="ECO:0007669"/>
    <property type="project" value="UniProtKB-KW"/>
</dbReference>
<dbReference type="CDD" id="cd08071">
    <property type="entry name" value="MPN_DUF2466"/>
    <property type="match status" value="1"/>
</dbReference>
<dbReference type="Gene3D" id="3.40.140.10">
    <property type="entry name" value="Cytidine Deaminase, domain 2"/>
    <property type="match status" value="1"/>
</dbReference>
<dbReference type="InterPro" id="IPR037518">
    <property type="entry name" value="MPN"/>
</dbReference>
<dbReference type="InterPro" id="IPR025657">
    <property type="entry name" value="RadC_JAB"/>
</dbReference>
<dbReference type="InterPro" id="IPR010994">
    <property type="entry name" value="RuvA_2-like"/>
</dbReference>
<dbReference type="InterPro" id="IPR001405">
    <property type="entry name" value="UPF0758"/>
</dbReference>
<dbReference type="InterPro" id="IPR020891">
    <property type="entry name" value="UPF0758_CS"/>
</dbReference>
<dbReference type="InterPro" id="IPR046778">
    <property type="entry name" value="UPF0758_N"/>
</dbReference>
<dbReference type="NCBIfam" id="NF000642">
    <property type="entry name" value="PRK00024.1"/>
    <property type="match status" value="1"/>
</dbReference>
<dbReference type="NCBIfam" id="TIGR00608">
    <property type="entry name" value="radc"/>
    <property type="match status" value="1"/>
</dbReference>
<dbReference type="PANTHER" id="PTHR30471">
    <property type="entry name" value="DNA REPAIR PROTEIN RADC"/>
    <property type="match status" value="1"/>
</dbReference>
<dbReference type="PANTHER" id="PTHR30471:SF3">
    <property type="entry name" value="UPF0758 PROTEIN YEES-RELATED"/>
    <property type="match status" value="1"/>
</dbReference>
<dbReference type="Pfam" id="PF04002">
    <property type="entry name" value="RadC"/>
    <property type="match status" value="1"/>
</dbReference>
<dbReference type="Pfam" id="PF20582">
    <property type="entry name" value="UPF0758_N"/>
    <property type="match status" value="1"/>
</dbReference>
<dbReference type="SUPFAM" id="SSF47781">
    <property type="entry name" value="RuvA domain 2-like"/>
    <property type="match status" value="1"/>
</dbReference>
<dbReference type="PROSITE" id="PS50249">
    <property type="entry name" value="MPN"/>
    <property type="match status" value="1"/>
</dbReference>
<dbReference type="PROSITE" id="PS01302">
    <property type="entry name" value="UPF0758"/>
    <property type="match status" value="1"/>
</dbReference>
<feature type="chain" id="PRO_0000190737" description="UPF0758 protein SP_1088">
    <location>
        <begin position="1"/>
        <end position="226"/>
    </location>
</feature>
<feature type="domain" description="MPN" evidence="1">
    <location>
        <begin position="103"/>
        <end position="225"/>
    </location>
</feature>
<feature type="short sequence motif" description="JAMM motif" evidence="1">
    <location>
        <begin position="174"/>
        <end position="187"/>
    </location>
</feature>
<feature type="binding site" evidence="1">
    <location>
        <position position="174"/>
    </location>
    <ligand>
        <name>Zn(2+)</name>
        <dbReference type="ChEBI" id="CHEBI:29105"/>
        <note>catalytic</note>
    </ligand>
</feature>
<feature type="binding site" evidence="1">
    <location>
        <position position="176"/>
    </location>
    <ligand>
        <name>Zn(2+)</name>
        <dbReference type="ChEBI" id="CHEBI:29105"/>
        <note>catalytic</note>
    </ligand>
</feature>
<feature type="binding site" evidence="1">
    <location>
        <position position="187"/>
    </location>
    <ligand>
        <name>Zn(2+)</name>
        <dbReference type="ChEBI" id="CHEBI:29105"/>
        <note>catalytic</note>
    </ligand>
</feature>
<sequence length="226" mass="25536">MYSISFQEDSLLPRERLAKEGVEALSNQELLAILLRTGTRQASVFEIAQKVLNNLSSLTDLKKMTLQELQSLSGIGRVKAIELQAMIELGHRIHKHETLEMESILSSQKLAKKMQQELGDKKQEHLVALYLNTQNQIIHQQTIFIGSVTRSIAEPREILHYAIKHMATSLILVHNHPSGAVAPSQNDDHVTKLVKEACELMGIVLLDHLIVSHSNYFSYREKTDLI</sequence>
<name>Y1088_STRPN</name>
<keyword id="KW-0378">Hydrolase</keyword>
<keyword id="KW-0479">Metal-binding</keyword>
<keyword id="KW-0482">Metalloprotease</keyword>
<keyword id="KW-0645">Protease</keyword>
<keyword id="KW-1185">Reference proteome</keyword>
<keyword id="KW-0862">Zinc</keyword>
<protein>
    <recommendedName>
        <fullName>UPF0758 protein SP_1088</fullName>
    </recommendedName>
</protein>
<organism>
    <name type="scientific">Streptococcus pneumoniae serotype 4 (strain ATCC BAA-334 / TIGR4)</name>
    <dbReference type="NCBI Taxonomy" id="170187"/>
    <lineage>
        <taxon>Bacteria</taxon>
        <taxon>Bacillati</taxon>
        <taxon>Bacillota</taxon>
        <taxon>Bacilli</taxon>
        <taxon>Lactobacillales</taxon>
        <taxon>Streptococcaceae</taxon>
        <taxon>Streptococcus</taxon>
    </lineage>
</organism>
<comment type="interaction">
    <interactant intactId="EBI-11704528">
        <id>Q97QW0</id>
    </interactant>
    <interactant intactId="EBI-11704524">
        <id>E7DN97</id>
    </interactant>
    <organismsDiffer>true</organismsDiffer>
    <experiments>2</experiments>
</comment>
<comment type="similarity">
    <text evidence="2">Belongs to the UPF0758 family.</text>
</comment>
<proteinExistence type="evidence at protein level"/>